<evidence type="ECO:0000250" key="1"/>
<evidence type="ECO:0000305" key="2"/>
<name>RF3_SALTY</name>
<reference key="1">
    <citation type="journal article" date="1995" name="J. Bacteriol.">
        <title>Comparative characterization of release factor RF-3 genes of Escherichia coli, Salmonella typhimurium, and Dichelobacter nodosus.</title>
        <authorList>
            <person name="Kawazu Y."/>
            <person name="Ito K."/>
            <person name="Matsumura K."/>
            <person name="Nakamura Y."/>
        </authorList>
    </citation>
    <scope>NUCLEOTIDE SEQUENCE [GENOMIC DNA]</scope>
    <source>
        <strain>LT2</strain>
    </source>
</reference>
<reference key="2">
    <citation type="journal article" date="2001" name="Nature">
        <title>Complete genome sequence of Salmonella enterica serovar Typhimurium LT2.</title>
        <authorList>
            <person name="McClelland M."/>
            <person name="Sanderson K.E."/>
            <person name="Spieth J."/>
            <person name="Clifton S.W."/>
            <person name="Latreille P."/>
            <person name="Courtney L."/>
            <person name="Porwollik S."/>
            <person name="Ali J."/>
            <person name="Dante M."/>
            <person name="Du F."/>
            <person name="Hou S."/>
            <person name="Layman D."/>
            <person name="Leonard S."/>
            <person name="Nguyen C."/>
            <person name="Scott K."/>
            <person name="Holmes A."/>
            <person name="Grewal N."/>
            <person name="Mulvaney E."/>
            <person name="Ryan E."/>
            <person name="Sun H."/>
            <person name="Florea L."/>
            <person name="Miller W."/>
            <person name="Stoneking T."/>
            <person name="Nhan M."/>
            <person name="Waterston R."/>
            <person name="Wilson R.K."/>
        </authorList>
    </citation>
    <scope>NUCLEOTIDE SEQUENCE [LARGE SCALE GENOMIC DNA]</scope>
    <source>
        <strain>LT2 / SGSC1412 / ATCC 700720</strain>
    </source>
</reference>
<gene>
    <name type="primary">prfC</name>
    <name type="ordered locus">STM4560</name>
</gene>
<organism>
    <name type="scientific">Salmonella typhimurium (strain LT2 / SGSC1412 / ATCC 700720)</name>
    <dbReference type="NCBI Taxonomy" id="99287"/>
    <lineage>
        <taxon>Bacteria</taxon>
        <taxon>Pseudomonadati</taxon>
        <taxon>Pseudomonadota</taxon>
        <taxon>Gammaproteobacteria</taxon>
        <taxon>Enterobacterales</taxon>
        <taxon>Enterobacteriaceae</taxon>
        <taxon>Salmonella</taxon>
    </lineage>
</organism>
<keyword id="KW-0963">Cytoplasm</keyword>
<keyword id="KW-0342">GTP-binding</keyword>
<keyword id="KW-0547">Nucleotide-binding</keyword>
<keyword id="KW-0648">Protein biosynthesis</keyword>
<keyword id="KW-1185">Reference proteome</keyword>
<proteinExistence type="inferred from homology"/>
<sequence>MTLSPYLQEVAKRRTFAIISHPDAGKTTITEKVLLFGQAIQTAGTVKGRGSSQHAKSDWMEMEKQRGISITTSVMQFPYHDCLVNLLDTPGHEDFSEDTYRTLTAVDCCLMVIDAAKGVEDRTRKLMEVTRLRDTPILTFMNKLDRDIRDPMELLDEVENELKIGCAPITWPIGCGKLFKGVYHLYKDETYLYQTGKGHTIQEVRIVKGLNNPDLDAAVGEDLAQQLRDELELVQGASNEFDEELFLAGEITPVFFGTALGNFGVDHMLDGLVAWAPAPMPRQTDTRTVEASEEKFTGFVFKIQANMDPKHRDRVAFMRVVSGKYEKGMKLRQVRTGKDVVISDALTFMAGDRSHVEEAYPGDILGLHNHGTIQIGDTFTQGEMMKFTGIPNFAPELFRRIRLKDPLKQKQLLKGLVQLSEEGAVQVFRPISNNDLIVGAVGVLQFDVVVARLKSEYNVEAIYESVNVATARWVESADAKKFEEFKRKNETQLALDGGDNLTYIAPTMVNLNLTQERYPDVQFRKTREH</sequence>
<protein>
    <recommendedName>
        <fullName>Peptide chain release factor 3</fullName>
        <shortName>RF-3</shortName>
    </recommendedName>
</protein>
<feature type="initiator methionine" description="Removed" evidence="1">
    <location>
        <position position="1"/>
    </location>
</feature>
<feature type="chain" id="PRO_0000210960" description="Peptide chain release factor 3">
    <location>
        <begin position="2"/>
        <end position="529"/>
    </location>
</feature>
<feature type="domain" description="tr-type G">
    <location>
        <begin position="11"/>
        <end position="280"/>
    </location>
</feature>
<feature type="binding site" evidence="1">
    <location>
        <begin position="20"/>
        <end position="27"/>
    </location>
    <ligand>
        <name>GTP</name>
        <dbReference type="ChEBI" id="CHEBI:37565"/>
    </ligand>
</feature>
<feature type="binding site" evidence="1">
    <location>
        <begin position="88"/>
        <end position="92"/>
    </location>
    <ligand>
        <name>GTP</name>
        <dbReference type="ChEBI" id="CHEBI:37565"/>
    </ligand>
</feature>
<feature type="binding site" evidence="1">
    <location>
        <begin position="142"/>
        <end position="145"/>
    </location>
    <ligand>
        <name>GTP</name>
        <dbReference type="ChEBI" id="CHEBI:37565"/>
    </ligand>
</feature>
<feature type="sequence conflict" description="In Ref. 1; BAA09090." evidence="2" ref="1">
    <original>G</original>
    <variation>A</variation>
    <location>
        <position position="165"/>
    </location>
</feature>
<feature type="sequence conflict" description="In Ref. 1; BAA09090." evidence="2" ref="1">
    <original>A</original>
    <variation>P</variation>
    <location>
        <position position="440"/>
    </location>
</feature>
<feature type="sequence conflict" description="In Ref. 1; BAA09090." evidence="2" ref="1">
    <original>V</original>
    <variation>E</variation>
    <location>
        <position position="474"/>
    </location>
</feature>
<dbReference type="EMBL" id="D50496">
    <property type="protein sequence ID" value="BAA09090.1"/>
    <property type="molecule type" value="Genomic_DNA"/>
</dbReference>
<dbReference type="EMBL" id="AE006468">
    <property type="protein sequence ID" value="AAL23375.1"/>
    <property type="molecule type" value="Genomic_DNA"/>
</dbReference>
<dbReference type="RefSeq" id="NP_463416.1">
    <property type="nucleotide sequence ID" value="NC_003197.2"/>
</dbReference>
<dbReference type="RefSeq" id="WP_000175965.1">
    <property type="nucleotide sequence ID" value="NC_003197.2"/>
</dbReference>
<dbReference type="SMR" id="Q56121"/>
<dbReference type="STRING" id="99287.STM4560"/>
<dbReference type="PaxDb" id="99287-STM4560"/>
<dbReference type="GeneID" id="1256086"/>
<dbReference type="KEGG" id="stm:STM4560"/>
<dbReference type="PATRIC" id="fig|99287.12.peg.4801"/>
<dbReference type="HOGENOM" id="CLU_002794_2_1_6"/>
<dbReference type="OMA" id="GFVFKIH"/>
<dbReference type="PhylomeDB" id="Q56121"/>
<dbReference type="BioCyc" id="SENT99287:STM4560-MONOMER"/>
<dbReference type="Proteomes" id="UP000001014">
    <property type="component" value="Chromosome"/>
</dbReference>
<dbReference type="GO" id="GO:0005829">
    <property type="term" value="C:cytosol"/>
    <property type="evidence" value="ECO:0000318"/>
    <property type="project" value="GO_Central"/>
</dbReference>
<dbReference type="GO" id="GO:0005525">
    <property type="term" value="F:GTP binding"/>
    <property type="evidence" value="ECO:0007669"/>
    <property type="project" value="UniProtKB-UniRule"/>
</dbReference>
<dbReference type="GO" id="GO:0003924">
    <property type="term" value="F:GTPase activity"/>
    <property type="evidence" value="ECO:0007669"/>
    <property type="project" value="InterPro"/>
</dbReference>
<dbReference type="GO" id="GO:0097216">
    <property type="term" value="F:guanosine tetraphosphate binding"/>
    <property type="evidence" value="ECO:0007669"/>
    <property type="project" value="UniProtKB-ARBA"/>
</dbReference>
<dbReference type="GO" id="GO:0016150">
    <property type="term" value="F:translation release factor activity, codon nonspecific"/>
    <property type="evidence" value="ECO:0000318"/>
    <property type="project" value="GO_Central"/>
</dbReference>
<dbReference type="GO" id="GO:0016149">
    <property type="term" value="F:translation release factor activity, codon specific"/>
    <property type="evidence" value="ECO:0007669"/>
    <property type="project" value="UniProtKB-UniRule"/>
</dbReference>
<dbReference type="GO" id="GO:0006449">
    <property type="term" value="P:regulation of translational termination"/>
    <property type="evidence" value="ECO:0007669"/>
    <property type="project" value="UniProtKB-UniRule"/>
</dbReference>
<dbReference type="GO" id="GO:0006415">
    <property type="term" value="P:translational termination"/>
    <property type="evidence" value="ECO:0000318"/>
    <property type="project" value="GO_Central"/>
</dbReference>
<dbReference type="CDD" id="cd04169">
    <property type="entry name" value="RF3"/>
    <property type="match status" value="1"/>
</dbReference>
<dbReference type="CDD" id="cd03689">
    <property type="entry name" value="RF3_II"/>
    <property type="match status" value="1"/>
</dbReference>
<dbReference type="CDD" id="cd16259">
    <property type="entry name" value="RF3_III"/>
    <property type="match status" value="1"/>
</dbReference>
<dbReference type="FunFam" id="2.40.30.10:FF:000040">
    <property type="entry name" value="Peptide chain release factor 3"/>
    <property type="match status" value="1"/>
</dbReference>
<dbReference type="FunFam" id="3.30.70.3280:FF:000001">
    <property type="entry name" value="Peptide chain release factor 3"/>
    <property type="match status" value="1"/>
</dbReference>
<dbReference type="FunFam" id="3.40.50.300:FF:000184">
    <property type="entry name" value="Peptide chain release factor 3"/>
    <property type="match status" value="1"/>
</dbReference>
<dbReference type="FunFam" id="3.40.50.300:FF:000253">
    <property type="entry name" value="Peptide chain release factor 3"/>
    <property type="match status" value="1"/>
</dbReference>
<dbReference type="Gene3D" id="3.40.50.300">
    <property type="entry name" value="P-loop containing nucleotide triphosphate hydrolases"/>
    <property type="match status" value="3"/>
</dbReference>
<dbReference type="Gene3D" id="3.30.70.3280">
    <property type="entry name" value="Peptide chain release factor 3, domain III"/>
    <property type="match status" value="1"/>
</dbReference>
<dbReference type="HAMAP" id="MF_00072">
    <property type="entry name" value="Rel_fac_3"/>
    <property type="match status" value="1"/>
</dbReference>
<dbReference type="InterPro" id="IPR053905">
    <property type="entry name" value="EF-G-like_DII"/>
</dbReference>
<dbReference type="InterPro" id="IPR035647">
    <property type="entry name" value="EFG_III/V"/>
</dbReference>
<dbReference type="InterPro" id="IPR031157">
    <property type="entry name" value="G_TR_CS"/>
</dbReference>
<dbReference type="InterPro" id="IPR027417">
    <property type="entry name" value="P-loop_NTPase"/>
</dbReference>
<dbReference type="InterPro" id="IPR004548">
    <property type="entry name" value="PrfC"/>
</dbReference>
<dbReference type="InterPro" id="IPR032090">
    <property type="entry name" value="RF3_C"/>
</dbReference>
<dbReference type="InterPro" id="IPR038467">
    <property type="entry name" value="RF3_dom_3_sf"/>
</dbReference>
<dbReference type="InterPro" id="IPR041732">
    <property type="entry name" value="RF3_GTP-bd"/>
</dbReference>
<dbReference type="InterPro" id="IPR005225">
    <property type="entry name" value="Small_GTP-bd"/>
</dbReference>
<dbReference type="InterPro" id="IPR000795">
    <property type="entry name" value="T_Tr_GTP-bd_dom"/>
</dbReference>
<dbReference type="InterPro" id="IPR009000">
    <property type="entry name" value="Transl_B-barrel_sf"/>
</dbReference>
<dbReference type="NCBIfam" id="TIGR00503">
    <property type="entry name" value="prfC"/>
    <property type="match status" value="1"/>
</dbReference>
<dbReference type="NCBIfam" id="NF001964">
    <property type="entry name" value="PRK00741.1"/>
    <property type="match status" value="1"/>
</dbReference>
<dbReference type="NCBIfam" id="TIGR00231">
    <property type="entry name" value="small_GTP"/>
    <property type="match status" value="1"/>
</dbReference>
<dbReference type="PANTHER" id="PTHR43556">
    <property type="entry name" value="PEPTIDE CHAIN RELEASE FACTOR RF3"/>
    <property type="match status" value="1"/>
</dbReference>
<dbReference type="PANTHER" id="PTHR43556:SF2">
    <property type="entry name" value="PEPTIDE CHAIN RELEASE FACTOR RF3"/>
    <property type="match status" value="1"/>
</dbReference>
<dbReference type="Pfam" id="PF22042">
    <property type="entry name" value="EF-G_D2"/>
    <property type="match status" value="1"/>
</dbReference>
<dbReference type="Pfam" id="PF00009">
    <property type="entry name" value="GTP_EFTU"/>
    <property type="match status" value="1"/>
</dbReference>
<dbReference type="Pfam" id="PF16658">
    <property type="entry name" value="RF3_C"/>
    <property type="match status" value="1"/>
</dbReference>
<dbReference type="PRINTS" id="PR00315">
    <property type="entry name" value="ELONGATNFCT"/>
</dbReference>
<dbReference type="SUPFAM" id="SSF54980">
    <property type="entry name" value="EF-G C-terminal domain-like"/>
    <property type="match status" value="1"/>
</dbReference>
<dbReference type="SUPFAM" id="SSF52540">
    <property type="entry name" value="P-loop containing nucleoside triphosphate hydrolases"/>
    <property type="match status" value="1"/>
</dbReference>
<dbReference type="SUPFAM" id="SSF50447">
    <property type="entry name" value="Translation proteins"/>
    <property type="match status" value="1"/>
</dbReference>
<dbReference type="PROSITE" id="PS00301">
    <property type="entry name" value="G_TR_1"/>
    <property type="match status" value="1"/>
</dbReference>
<dbReference type="PROSITE" id="PS51722">
    <property type="entry name" value="G_TR_2"/>
    <property type="match status" value="1"/>
</dbReference>
<comment type="function">
    <text>Increases the formation of ribosomal termination complexes and stimulates activities of RF-1 and RF-2. It binds guanine nucleotides and has strong preference for UGA stop codons. It may interact directly with the ribosome. The stimulation of RF-1 and RF-2 is significantly reduced by GTP and GDP, but not by GMP.</text>
</comment>
<comment type="subcellular location">
    <subcellularLocation>
        <location evidence="1">Cytoplasm</location>
    </subcellularLocation>
</comment>
<comment type="similarity">
    <text evidence="2">Belongs to the TRAFAC class translation factor GTPase superfamily. Classic translation factor GTPase family. PrfC subfamily.</text>
</comment>
<accession>Q56121</accession>